<organism evidence="9">
    <name type="scientific">Drosophila melanogaster</name>
    <name type="common">Fruit fly</name>
    <dbReference type="NCBI Taxonomy" id="7227"/>
    <lineage>
        <taxon>Eukaryota</taxon>
        <taxon>Metazoa</taxon>
        <taxon>Ecdysozoa</taxon>
        <taxon>Arthropoda</taxon>
        <taxon>Hexapoda</taxon>
        <taxon>Insecta</taxon>
        <taxon>Pterygota</taxon>
        <taxon>Neoptera</taxon>
        <taxon>Endopterygota</taxon>
        <taxon>Diptera</taxon>
        <taxon>Brachycera</taxon>
        <taxon>Muscomorpha</taxon>
        <taxon>Ephydroidea</taxon>
        <taxon>Drosophilidae</taxon>
        <taxon>Drosophila</taxon>
        <taxon>Sophophora</taxon>
    </lineage>
</organism>
<gene>
    <name evidence="5 8" type="primary">Gorab</name>
    <name evidence="8" type="ORF">CG33052</name>
</gene>
<name>GORAB_DROME</name>
<comment type="function">
    <text evidence="3 4">Required for centriole duplication likely through its interaction with Sas-6 (PubMed:29892014, PubMed:33704067). During embryogenesis, maternally provided protein is required for centrosome duplication and nuclear division cycles of the syncytial embryos (PubMed:29892014). In femoral chordotonal organs, required for sensory cilia structural integrity and functionality necessary for motor coordination (PubMed:29892014). In male germline, has a role in cytokinesis which seems dependent on its localization to the Golgi (PubMed:29892014).</text>
</comment>
<comment type="subunit">
    <text evidence="3 4">Homodimer (via C-terminus); dimerization appears to be required for its trans-Golgi localization but not for its function and centriolar localization (PubMed:33704067). Interacts (via C-terminus) with Rab6; binds Rab6 as a homodimer, this interaction seems to be required for trans-Golgi localization (PubMed:33704067). Interacts (via C-terminus) with Sas-6; binds as a monomer to a Sas-6 homodimer (PubMed:29892014, PubMed:33704067).</text>
</comment>
<comment type="subcellular location">
    <subcellularLocation>
        <location evidence="3">Cytoplasm</location>
        <location evidence="3">Cytoskeleton</location>
        <location evidence="3">Microtubule organizing center</location>
        <location evidence="3">Centrosome</location>
        <location evidence="3">Centriole</location>
    </subcellularLocation>
    <subcellularLocation>
        <location evidence="3 4">Cytoplasm</location>
        <location evidence="3 4">Cytoskeleton</location>
        <location evidence="3 4">Microtubule organizing center</location>
        <location evidence="3 4">Centrosome</location>
    </subcellularLocation>
    <subcellularLocation>
        <location evidence="3 4">Golgi apparatus</location>
        <location evidence="3 4">trans-Golgi network</location>
    </subcellularLocation>
    <text evidence="3 4">Co-localizes with the centriole in interphase and mitosis (PubMed:29892014). Mostly found in the Golgi, with a small amount detected in centrosomes (PubMed:29892014, PubMed:33704067). In spermatocytes, localizes to the trans-Golgi and inside the Golgi cisternae (PubMed:33704067).</text>
</comment>
<comment type="disruption phenotype">
    <text evidence="3 4">Viable (PubMed:29892014). Loss of daughter centrioles and asymmetrical mother centriole-derived basal body results in defective nine-fold symmetry of cilia in neurosensory organs and therefore motor coordination defects (PubMed:29892014, PubMed:33704067). Plp-associated structures are also disorganized but ciliary structures are still present in the scolopale rods (PubMed:29892014). Males are fertile, whereas female are sterile (PubMed:29892014). Results in failure to duplicate centrosomes in embryos and diploid larval tissues (PubMed:29892014).</text>
</comment>
<comment type="similarity">
    <text evidence="6">Belongs to the GORAB family.</text>
</comment>
<comment type="sequence caution" evidence="6">
    <conflict type="frameshift">
        <sequence resource="EMBL-CDS" id="AAL48058"/>
    </conflict>
</comment>
<reference evidence="9" key="1">
    <citation type="journal article" date="2000" name="Science">
        <title>The genome sequence of Drosophila melanogaster.</title>
        <authorList>
            <person name="Adams M.D."/>
            <person name="Celniker S.E."/>
            <person name="Holt R.A."/>
            <person name="Evans C.A."/>
            <person name="Gocayne J.D."/>
            <person name="Amanatides P.G."/>
            <person name="Scherer S.E."/>
            <person name="Li P.W."/>
            <person name="Hoskins R.A."/>
            <person name="Galle R.F."/>
            <person name="George R.A."/>
            <person name="Lewis S.E."/>
            <person name="Richards S."/>
            <person name="Ashburner M."/>
            <person name="Henderson S.N."/>
            <person name="Sutton G.G."/>
            <person name="Wortman J.R."/>
            <person name="Yandell M.D."/>
            <person name="Zhang Q."/>
            <person name="Chen L.X."/>
            <person name="Brandon R.C."/>
            <person name="Rogers Y.-H.C."/>
            <person name="Blazej R.G."/>
            <person name="Champe M."/>
            <person name="Pfeiffer B.D."/>
            <person name="Wan K.H."/>
            <person name="Doyle C."/>
            <person name="Baxter E.G."/>
            <person name="Helt G."/>
            <person name="Nelson C.R."/>
            <person name="Miklos G.L.G."/>
            <person name="Abril J.F."/>
            <person name="Agbayani A."/>
            <person name="An H.-J."/>
            <person name="Andrews-Pfannkoch C."/>
            <person name="Baldwin D."/>
            <person name="Ballew R.M."/>
            <person name="Basu A."/>
            <person name="Baxendale J."/>
            <person name="Bayraktaroglu L."/>
            <person name="Beasley E.M."/>
            <person name="Beeson K.Y."/>
            <person name="Benos P.V."/>
            <person name="Berman B.P."/>
            <person name="Bhandari D."/>
            <person name="Bolshakov S."/>
            <person name="Borkova D."/>
            <person name="Botchan M.R."/>
            <person name="Bouck J."/>
            <person name="Brokstein P."/>
            <person name="Brottier P."/>
            <person name="Burtis K.C."/>
            <person name="Busam D.A."/>
            <person name="Butler H."/>
            <person name="Cadieu E."/>
            <person name="Center A."/>
            <person name="Chandra I."/>
            <person name="Cherry J.M."/>
            <person name="Cawley S."/>
            <person name="Dahlke C."/>
            <person name="Davenport L.B."/>
            <person name="Davies P."/>
            <person name="de Pablos B."/>
            <person name="Delcher A."/>
            <person name="Deng Z."/>
            <person name="Mays A.D."/>
            <person name="Dew I."/>
            <person name="Dietz S.M."/>
            <person name="Dodson K."/>
            <person name="Doup L.E."/>
            <person name="Downes M."/>
            <person name="Dugan-Rocha S."/>
            <person name="Dunkov B.C."/>
            <person name="Dunn P."/>
            <person name="Durbin K.J."/>
            <person name="Evangelista C.C."/>
            <person name="Ferraz C."/>
            <person name="Ferriera S."/>
            <person name="Fleischmann W."/>
            <person name="Fosler C."/>
            <person name="Gabrielian A.E."/>
            <person name="Garg N.S."/>
            <person name="Gelbart W.M."/>
            <person name="Glasser K."/>
            <person name="Glodek A."/>
            <person name="Gong F."/>
            <person name="Gorrell J.H."/>
            <person name="Gu Z."/>
            <person name="Guan P."/>
            <person name="Harris M."/>
            <person name="Harris N.L."/>
            <person name="Harvey D.A."/>
            <person name="Heiman T.J."/>
            <person name="Hernandez J.R."/>
            <person name="Houck J."/>
            <person name="Hostin D."/>
            <person name="Houston K.A."/>
            <person name="Howland T.J."/>
            <person name="Wei M.-H."/>
            <person name="Ibegwam C."/>
            <person name="Jalali M."/>
            <person name="Kalush F."/>
            <person name="Karpen G.H."/>
            <person name="Ke Z."/>
            <person name="Kennison J.A."/>
            <person name="Ketchum K.A."/>
            <person name="Kimmel B.E."/>
            <person name="Kodira C.D."/>
            <person name="Kraft C.L."/>
            <person name="Kravitz S."/>
            <person name="Kulp D."/>
            <person name="Lai Z."/>
            <person name="Lasko P."/>
            <person name="Lei Y."/>
            <person name="Levitsky A.A."/>
            <person name="Li J.H."/>
            <person name="Li Z."/>
            <person name="Liang Y."/>
            <person name="Lin X."/>
            <person name="Liu X."/>
            <person name="Mattei B."/>
            <person name="McIntosh T.C."/>
            <person name="McLeod M.P."/>
            <person name="McPherson D."/>
            <person name="Merkulov G."/>
            <person name="Milshina N.V."/>
            <person name="Mobarry C."/>
            <person name="Morris J."/>
            <person name="Moshrefi A."/>
            <person name="Mount S.M."/>
            <person name="Moy M."/>
            <person name="Murphy B."/>
            <person name="Murphy L."/>
            <person name="Muzny D.M."/>
            <person name="Nelson D.L."/>
            <person name="Nelson D.R."/>
            <person name="Nelson K.A."/>
            <person name="Nixon K."/>
            <person name="Nusskern D.R."/>
            <person name="Pacleb J.M."/>
            <person name="Palazzolo M."/>
            <person name="Pittman G.S."/>
            <person name="Pan S."/>
            <person name="Pollard J."/>
            <person name="Puri V."/>
            <person name="Reese M.G."/>
            <person name="Reinert K."/>
            <person name="Remington K."/>
            <person name="Saunders R.D.C."/>
            <person name="Scheeler F."/>
            <person name="Shen H."/>
            <person name="Shue B.C."/>
            <person name="Siden-Kiamos I."/>
            <person name="Simpson M."/>
            <person name="Skupski M.P."/>
            <person name="Smith T.J."/>
            <person name="Spier E."/>
            <person name="Spradling A.C."/>
            <person name="Stapleton M."/>
            <person name="Strong R."/>
            <person name="Sun E."/>
            <person name="Svirskas R."/>
            <person name="Tector C."/>
            <person name="Turner R."/>
            <person name="Venter E."/>
            <person name="Wang A.H."/>
            <person name="Wang X."/>
            <person name="Wang Z.-Y."/>
            <person name="Wassarman D.A."/>
            <person name="Weinstock G.M."/>
            <person name="Weissenbach J."/>
            <person name="Williams S.M."/>
            <person name="Woodage T."/>
            <person name="Worley K.C."/>
            <person name="Wu D."/>
            <person name="Yang S."/>
            <person name="Yao Q.A."/>
            <person name="Ye J."/>
            <person name="Yeh R.-F."/>
            <person name="Zaveri J.S."/>
            <person name="Zhan M."/>
            <person name="Zhang G."/>
            <person name="Zhao Q."/>
            <person name="Zheng L."/>
            <person name="Zheng X.H."/>
            <person name="Zhong F.N."/>
            <person name="Zhong W."/>
            <person name="Zhou X."/>
            <person name="Zhu S.C."/>
            <person name="Zhu X."/>
            <person name="Smith H.O."/>
            <person name="Gibbs R.A."/>
            <person name="Myers E.W."/>
            <person name="Rubin G.M."/>
            <person name="Venter J.C."/>
        </authorList>
    </citation>
    <scope>NUCLEOTIDE SEQUENCE [LARGE SCALE GENOMIC DNA]</scope>
    <source>
        <strain evidence="9">Berkeley</strain>
    </source>
</reference>
<reference evidence="9" key="2">
    <citation type="journal article" date="2002" name="Genome Biol.">
        <title>Annotation of the Drosophila melanogaster euchromatic genome: a systematic review.</title>
        <authorList>
            <person name="Misra S."/>
            <person name="Crosby M.A."/>
            <person name="Mungall C.J."/>
            <person name="Matthews B.B."/>
            <person name="Campbell K.S."/>
            <person name="Hradecky P."/>
            <person name="Huang Y."/>
            <person name="Kaminker J.S."/>
            <person name="Millburn G.H."/>
            <person name="Prochnik S.E."/>
            <person name="Smith C.D."/>
            <person name="Tupy J.L."/>
            <person name="Whitfield E.J."/>
            <person name="Bayraktaroglu L."/>
            <person name="Berman B.P."/>
            <person name="Bettencourt B.R."/>
            <person name="Celniker S.E."/>
            <person name="de Grey A.D.N.J."/>
            <person name="Drysdale R.A."/>
            <person name="Harris N.L."/>
            <person name="Richter J."/>
            <person name="Russo S."/>
            <person name="Schroeder A.J."/>
            <person name="Shu S.Q."/>
            <person name="Stapleton M."/>
            <person name="Yamada C."/>
            <person name="Ashburner M."/>
            <person name="Gelbart W.M."/>
            <person name="Rubin G.M."/>
            <person name="Lewis S.E."/>
        </authorList>
    </citation>
    <scope>GENOME REANNOTATION</scope>
    <source>
        <strain evidence="9">Berkeley</strain>
    </source>
</reference>
<reference evidence="7" key="3">
    <citation type="journal article" date="2002" name="Genome Biol.">
        <title>A Drosophila full-length cDNA resource.</title>
        <authorList>
            <person name="Stapleton M."/>
            <person name="Carlson J.W."/>
            <person name="Brokstein P."/>
            <person name="Yu C."/>
            <person name="Champe M."/>
            <person name="George R.A."/>
            <person name="Guarin H."/>
            <person name="Kronmiller B."/>
            <person name="Pacleb J.M."/>
            <person name="Park S."/>
            <person name="Wan K.H."/>
            <person name="Rubin G.M."/>
            <person name="Celniker S.E."/>
        </authorList>
    </citation>
    <scope>NUCLEOTIDE SEQUENCE [LARGE SCALE MRNA]</scope>
    <source>
        <strain evidence="7">Berkeley</strain>
        <tissue evidence="7">Embryo</tissue>
    </source>
</reference>
<reference evidence="6" key="4">
    <citation type="journal article" date="2018" name="Nat. Genet.">
        <title>Gorab is a Golgi protein required for structure and duplication of Drosophila centrioles.</title>
        <authorList>
            <person name="Kovacs L."/>
            <person name="Chao-Chu J."/>
            <person name="Schneider S."/>
            <person name="Gottardo M."/>
            <person name="Tzolovsky G."/>
            <person name="Dzhindzhev N.S."/>
            <person name="Riparbelli M.G."/>
            <person name="Callaini G."/>
            <person name="Glover D.M."/>
        </authorList>
    </citation>
    <scope>FUNCTION</scope>
    <scope>INTERACTION WITH SAS-6</scope>
    <scope>SUBCELLULAR LOCATION</scope>
    <scope>DISRUPTION PHENOTYPE</scope>
    <scope>MUTAGENESIS OF 246-ALA--ALA-259; 246-ALA--SER-323; 260-CYS--ASN-286; VAL-266 AND 287-ALA--SER-323</scope>
    <scope>IDENTIFICATION BY MASS SPECTROMETRY</scope>
</reference>
<reference key="5">
    <citation type="journal article" date="2021" name="Elife">
        <title>The dimeric Golgi protein Gorab binds to Sas6 as a monomer to mediate centriole duplication.</title>
        <authorList>
            <person name="Fatalska A."/>
            <person name="Stepinac E."/>
            <person name="Richter M."/>
            <person name="Kovacs L."/>
            <person name="Pietras Z."/>
            <person name="Puchinger M."/>
            <person name="Dong G."/>
            <person name="Dadlez M."/>
            <person name="Glover D.M."/>
        </authorList>
    </citation>
    <scope>FUNCTION</scope>
    <scope>SUBUNIT</scope>
    <scope>INTERACTION WITH SAS-6 AND RAB6</scope>
    <scope>SUBCELLULAR LOCATION</scope>
    <scope>DISRUPTION PHENOTYPE</scope>
    <scope>MUTAGENESIS OF 1-MET--ASP-194; 1-MET--GLN-222; 1-MET--LEU-245; 197-GLN--ALA-259; 219-GLN--ASP-244; 224-THR--PRO-338; 244-ASP--ALA-259; 247-VAL--PRO-338; 260-CYS--VAL-266; 260-CYS--ASN-286; 261-ILE--PRO-338; 267-GLU--LYS-281; 271-VAL--PRO-338; 282-ILE--ASN-286; 286-ASN--VAL-320; 288-SER--PRO-338; 303-ALA--VAL-320 AND 306-ALA--PRO-338</scope>
</reference>
<keyword id="KW-0175">Coiled coil</keyword>
<keyword id="KW-0963">Cytoplasm</keyword>
<keyword id="KW-0206">Cytoskeleton</keyword>
<keyword id="KW-0333">Golgi apparatus</keyword>
<keyword id="KW-1185">Reference proteome</keyword>
<sequence length="338" mass="37707">MTEKFNGFSHDEILKITGVKEGGVGKRPASLEAAKPALRIQPGIRRMPDKIFRQADQLRKQQQQQPQQPIQKPDVAKKTKSGTATPTEKPPTPTPAAEDDVANGSLNLDRPLSDSLIEALYHGNATARDKKTPATYADAETTSTDDSSILKISGGDSQTTSSTDDGSILPSTQDTSPRERLNTDSPFKGISLKDFEQHRRMIEEQNKQKKQMLYQAIEQHTQKTAAESRKIEEIRHELSKLESDLAVDVALLRKQIDNACIHFANVEKQYVKIEAQFLRAKIELHNASEKKELLTEHLCTVIAHNEDRKAQKLTELMQKVGLSPTDDCQPIDLTQQSP</sequence>
<evidence type="ECO:0000255" key="1"/>
<evidence type="ECO:0000256" key="2">
    <source>
        <dbReference type="SAM" id="MobiDB-lite"/>
    </source>
</evidence>
<evidence type="ECO:0000269" key="3">
    <source>
    </source>
</evidence>
<evidence type="ECO:0000269" key="4">
    <source>
    </source>
</evidence>
<evidence type="ECO:0000303" key="5">
    <source>
    </source>
</evidence>
<evidence type="ECO:0000305" key="6"/>
<evidence type="ECO:0000312" key="7">
    <source>
        <dbReference type="EMBL" id="AAL48058.1"/>
    </source>
</evidence>
<evidence type="ECO:0000312" key="8">
    <source>
        <dbReference type="FlyBase" id="FBgn0053052"/>
    </source>
</evidence>
<evidence type="ECO:0000312" key="9">
    <source>
        <dbReference type="Proteomes" id="UP000000803"/>
    </source>
</evidence>
<feature type="chain" id="PRO_0000445701" description="RAB6-interacting golgin" evidence="6">
    <location>
        <begin position="1"/>
        <end position="338"/>
    </location>
</feature>
<feature type="region of interest" description="Disordered" evidence="2">
    <location>
        <begin position="1"/>
        <end position="109"/>
    </location>
</feature>
<feature type="region of interest" description="Disordered" evidence="2">
    <location>
        <begin position="127"/>
        <end position="188"/>
    </location>
</feature>
<feature type="region of interest" description="Essential for Sas-6 binding" evidence="4">
    <location>
        <begin position="244"/>
        <end position="260"/>
    </location>
</feature>
<feature type="region of interest" description="Necessary for localization to the Golgi" evidence="3">
    <location>
        <begin position="246"/>
        <end position="323"/>
    </location>
</feature>
<feature type="region of interest" description="Necessary for localization to the centrosome" evidence="3">
    <location>
        <begin position="246"/>
        <end position="286"/>
    </location>
</feature>
<feature type="region of interest" description="Necessary for interaction with Sas-6 and essential for homodimerization" evidence="3 4">
    <location>
        <begin position="260"/>
        <end position="286"/>
    </location>
</feature>
<feature type="coiled-coil region" evidence="1">
    <location>
        <begin position="192"/>
        <end position="244"/>
    </location>
</feature>
<feature type="compositionally biased region" description="Basic and acidic residues" evidence="2">
    <location>
        <begin position="1"/>
        <end position="14"/>
    </location>
</feature>
<feature type="compositionally biased region" description="Basic and acidic residues" evidence="2">
    <location>
        <begin position="46"/>
        <end position="59"/>
    </location>
</feature>
<feature type="compositionally biased region" description="Low complexity" evidence="2">
    <location>
        <begin position="60"/>
        <end position="73"/>
    </location>
</feature>
<feature type="compositionally biased region" description="Low complexity" evidence="2">
    <location>
        <begin position="153"/>
        <end position="167"/>
    </location>
</feature>
<feature type="mutagenesis site" description="Abolishes binding with Rab6." evidence="4">
    <location>
        <begin position="1"/>
        <end position="245"/>
    </location>
</feature>
<feature type="mutagenesis site" description="Decreased binding with Rab6." evidence="4">
    <location>
        <begin position="1"/>
        <end position="222"/>
    </location>
</feature>
<feature type="mutagenesis site" description="No effect on binding with Rab6." evidence="4">
    <location>
        <begin position="1"/>
        <end position="194"/>
    </location>
</feature>
<feature type="mutagenesis site" description="Abolishes binding with Sas-6." evidence="4">
    <location>
        <begin position="197"/>
        <end position="259"/>
    </location>
</feature>
<feature type="mutagenesis site" description="Decreased binding with Sas-6." evidence="4">
    <location>
        <begin position="219"/>
        <end position="244"/>
    </location>
</feature>
<feature type="mutagenesis site" description="Abolishes binding with Sas-6 and Rab6." evidence="4">
    <location>
        <begin position="224"/>
        <end position="338"/>
    </location>
</feature>
<feature type="mutagenesis site" description="Abolishes binding with Sas-6." evidence="4">
    <location>
        <begin position="244"/>
        <end position="259"/>
    </location>
</feature>
<feature type="mutagenesis site" description="Loss of localization to the Golgi and centrosomes. Results in female sterility and loss of coordination." evidence="3">
    <location>
        <begin position="246"/>
        <end position="323"/>
    </location>
</feature>
<feature type="mutagenesis site" description="Loss of localization to the Golgi and centrosomes. Results in female sterility and loss of coordination." evidence="3">
    <location>
        <begin position="246"/>
        <end position="259"/>
    </location>
</feature>
<feature type="mutagenesis site" description="Abolishes binding with Sas-6 and Rab6." evidence="4">
    <location>
        <begin position="247"/>
        <end position="338"/>
    </location>
</feature>
<feature type="mutagenesis site" description="Decreased binding with Sas-6 and abolishes homodimerization. Loss of localization to the Golgi and centrosomes. Results in female sterility and loss of coordination." evidence="3 4">
    <location>
        <begin position="260"/>
        <end position="286"/>
    </location>
</feature>
<feature type="mutagenesis site" description="Decreased binding with Sas-6." evidence="4">
    <location>
        <begin position="260"/>
        <end position="266"/>
    </location>
</feature>
<feature type="mutagenesis site" description="Abolishes binding with Rab6 and decreased binding with Sas-6." evidence="4">
    <location>
        <begin position="261"/>
        <end position="338"/>
    </location>
</feature>
<feature type="mutagenesis site" description="Loss of localization to the Golgi while retaining localization to the centrosomes." evidence="3">
    <original>V</original>
    <variation>P</variation>
    <location>
        <position position="266"/>
    </location>
</feature>
<feature type="mutagenesis site" description="Decreased binding with Sas-6." evidence="4">
    <location>
        <begin position="267"/>
        <end position="281"/>
    </location>
</feature>
<feature type="mutagenesis site" description="Abolishes binding with Rab6. No effect on binding to Sas-6." evidence="4">
    <location>
        <begin position="271"/>
        <end position="338"/>
    </location>
</feature>
<feature type="mutagenesis site" description="Loss of localization to the Golgi while retaining localization to the centrosomes. No effect on binding with Sas-6." evidence="4">
    <location>
        <begin position="282"/>
        <end position="286"/>
    </location>
</feature>
<feature type="mutagenesis site" description="No effect on binding with Sas-6." evidence="4">
    <location>
        <begin position="286"/>
        <end position="320"/>
    </location>
</feature>
<feature type="mutagenesis site" description="Loss of localization to the Golgi while retaining localization to the centrosomes." evidence="3">
    <location>
        <begin position="287"/>
        <end position="323"/>
    </location>
</feature>
<feature type="mutagenesis site" description="Abolishes binding with Rab6. No effect on binding to Sas-6." evidence="4">
    <location>
        <begin position="288"/>
        <end position="338"/>
    </location>
</feature>
<feature type="mutagenesis site" description="No effect on binding with Sas-6." evidence="4">
    <location>
        <begin position="303"/>
        <end position="320"/>
    </location>
</feature>
<feature type="mutagenesis site" description="Abolishes binding with Rab6." evidence="4">
    <location>
        <begin position="306"/>
        <end position="338"/>
    </location>
</feature>
<accession>Q8IQQ4</accession>
<accession>Q8SZQ5</accession>
<dbReference type="EMBL" id="AE014296">
    <property type="protein sequence ID" value="AAN11712.1"/>
    <property type="molecule type" value="Genomic_DNA"/>
</dbReference>
<dbReference type="EMBL" id="AY070587">
    <property type="protein sequence ID" value="AAL48058.1"/>
    <property type="status" value="ALT_FRAME"/>
    <property type="molecule type" value="mRNA"/>
</dbReference>
<dbReference type="RefSeq" id="NP_788523.1">
    <property type="nucleotide sequence ID" value="NM_176345.3"/>
</dbReference>
<dbReference type="SMR" id="Q8IQQ4"/>
<dbReference type="FunCoup" id="Q8IQQ4">
    <property type="interactions" value="28"/>
</dbReference>
<dbReference type="IntAct" id="Q8IQQ4">
    <property type="interactions" value="5"/>
</dbReference>
<dbReference type="STRING" id="7227.FBpp0074991"/>
<dbReference type="GlyGen" id="Q8IQQ4">
    <property type="glycosylation" value="1 site"/>
</dbReference>
<dbReference type="PaxDb" id="7227-FBpp0074991"/>
<dbReference type="EnsemblMetazoa" id="FBtr0075229">
    <property type="protein sequence ID" value="FBpp0074991"/>
    <property type="gene ID" value="FBgn0053052"/>
</dbReference>
<dbReference type="GeneID" id="326245"/>
<dbReference type="KEGG" id="dme:Dmel_CG33052"/>
<dbReference type="UCSC" id="CG33052-RA">
    <property type="organism name" value="d. melanogaster"/>
</dbReference>
<dbReference type="AGR" id="FB:FBgn0053052"/>
<dbReference type="CTD" id="92344"/>
<dbReference type="FlyBase" id="FBgn0053052">
    <property type="gene designation" value="Gorab"/>
</dbReference>
<dbReference type="VEuPathDB" id="VectorBase:FBgn0053052"/>
<dbReference type="eggNOG" id="ENOG502R60M">
    <property type="taxonomic scope" value="Eukaryota"/>
</dbReference>
<dbReference type="GeneTree" id="ENSGT00390000014886"/>
<dbReference type="HOGENOM" id="CLU_075655_0_0_1"/>
<dbReference type="InParanoid" id="Q8IQQ4"/>
<dbReference type="OMA" id="DNACIHF"/>
<dbReference type="OrthoDB" id="9909311at2759"/>
<dbReference type="PhylomeDB" id="Q8IQQ4"/>
<dbReference type="SignaLink" id="Q8IQQ4"/>
<dbReference type="BioGRID-ORCS" id="326245">
    <property type="hits" value="0 hits in 1 CRISPR screen"/>
</dbReference>
<dbReference type="GenomeRNAi" id="326245"/>
<dbReference type="PRO" id="PR:Q8IQQ4"/>
<dbReference type="Proteomes" id="UP000000803">
    <property type="component" value="Chromosome 3L"/>
</dbReference>
<dbReference type="Bgee" id="FBgn0053052">
    <property type="expression patterns" value="Expressed in male accessory gland main cell (Drosophila) in male reproductive gland and 24 other cell types or tissues"/>
</dbReference>
<dbReference type="GO" id="GO:0005814">
    <property type="term" value="C:centriole"/>
    <property type="evidence" value="ECO:0000314"/>
    <property type="project" value="UniProtKB"/>
</dbReference>
<dbReference type="GO" id="GO:0005813">
    <property type="term" value="C:centrosome"/>
    <property type="evidence" value="ECO:0000314"/>
    <property type="project" value="UniProtKB"/>
</dbReference>
<dbReference type="GO" id="GO:0031985">
    <property type="term" value="C:Golgi cisterna"/>
    <property type="evidence" value="ECO:0000314"/>
    <property type="project" value="UniProtKB"/>
</dbReference>
<dbReference type="GO" id="GO:0005802">
    <property type="term" value="C:trans-Golgi network"/>
    <property type="evidence" value="ECO:0000314"/>
    <property type="project" value="UniProtKB"/>
</dbReference>
<dbReference type="GO" id="GO:0042802">
    <property type="term" value="F:identical protein binding"/>
    <property type="evidence" value="ECO:0000353"/>
    <property type="project" value="UniProtKB"/>
</dbReference>
<dbReference type="GO" id="GO:1905515">
    <property type="term" value="P:non-motile cilium assembly"/>
    <property type="evidence" value="ECO:0000318"/>
    <property type="project" value="GO_Central"/>
</dbReference>
<dbReference type="GO" id="GO:0046601">
    <property type="term" value="P:positive regulation of centriole replication"/>
    <property type="evidence" value="ECO:0000315"/>
    <property type="project" value="UniProtKB"/>
</dbReference>
<dbReference type="GO" id="GO:0045724">
    <property type="term" value="P:positive regulation of cilium assembly"/>
    <property type="evidence" value="ECO:0000315"/>
    <property type="project" value="UniProtKB"/>
</dbReference>
<dbReference type="GO" id="GO:0032467">
    <property type="term" value="P:positive regulation of cytokinesis"/>
    <property type="evidence" value="ECO:0000315"/>
    <property type="project" value="UniProtKB"/>
</dbReference>
<dbReference type="InterPro" id="IPR007033">
    <property type="entry name" value="GORAB"/>
</dbReference>
<dbReference type="PANTHER" id="PTHR21470:SF2">
    <property type="entry name" value="RAB6-INTERACTING GOLGIN"/>
    <property type="match status" value="1"/>
</dbReference>
<dbReference type="PANTHER" id="PTHR21470">
    <property type="entry name" value="RAB6-INTERACTING PROTEIN GORAB"/>
    <property type="match status" value="1"/>
</dbReference>
<dbReference type="Pfam" id="PF04949">
    <property type="entry name" value="Transcrip_act"/>
    <property type="match status" value="1"/>
</dbReference>
<protein>
    <recommendedName>
        <fullName evidence="6">RAB6-interacting golgin</fullName>
    </recommendedName>
</protein>
<proteinExistence type="evidence at protein level"/>